<gene>
    <name evidence="1" type="primary">rplO</name>
    <name type="ordered locus">BA_0129</name>
    <name type="ordered locus">GBAA_0129</name>
    <name type="ordered locus">BAS0129</name>
</gene>
<protein>
    <recommendedName>
        <fullName evidence="1">Large ribosomal subunit protein uL15</fullName>
    </recommendedName>
    <alternativeName>
        <fullName evidence="3">50S ribosomal protein L15</fullName>
    </alternativeName>
</protein>
<comment type="function">
    <text evidence="1">Binds to the 23S rRNA.</text>
</comment>
<comment type="subunit">
    <text evidence="1">Part of the 50S ribosomal subunit.</text>
</comment>
<comment type="similarity">
    <text evidence="1">Belongs to the universal ribosomal protein uL15 family.</text>
</comment>
<sequence length="146" mass="15492">MKLHELKPAEGSRKVRNRVGRGIGSGNGKTAGKGHKGQNARSGGGVRLGFEGGQTPLFRRLPKRGFTNINRKEFAIVNLSTLNRFEDGTEVTPELLLETGVISKLNDGVKILASGAVEKKLTVKAHKFSSSAKEAIEAAGGSVEVI</sequence>
<reference key="1">
    <citation type="journal article" date="2003" name="Nature">
        <title>The genome sequence of Bacillus anthracis Ames and comparison to closely related bacteria.</title>
        <authorList>
            <person name="Read T.D."/>
            <person name="Peterson S.N."/>
            <person name="Tourasse N.J."/>
            <person name="Baillie L.W."/>
            <person name="Paulsen I.T."/>
            <person name="Nelson K.E."/>
            <person name="Tettelin H."/>
            <person name="Fouts D.E."/>
            <person name="Eisen J.A."/>
            <person name="Gill S.R."/>
            <person name="Holtzapple E.K."/>
            <person name="Okstad O.A."/>
            <person name="Helgason E."/>
            <person name="Rilstone J."/>
            <person name="Wu M."/>
            <person name="Kolonay J.F."/>
            <person name="Beanan M.J."/>
            <person name="Dodson R.J."/>
            <person name="Brinkac L.M."/>
            <person name="Gwinn M.L."/>
            <person name="DeBoy R.T."/>
            <person name="Madpu R."/>
            <person name="Daugherty S.C."/>
            <person name="Durkin A.S."/>
            <person name="Haft D.H."/>
            <person name="Nelson W.C."/>
            <person name="Peterson J.D."/>
            <person name="Pop M."/>
            <person name="Khouri H.M."/>
            <person name="Radune D."/>
            <person name="Benton J.L."/>
            <person name="Mahamoud Y."/>
            <person name="Jiang L."/>
            <person name="Hance I.R."/>
            <person name="Weidman J.F."/>
            <person name="Berry K.J."/>
            <person name="Plaut R.D."/>
            <person name="Wolf A.M."/>
            <person name="Watkins K.L."/>
            <person name="Nierman W.C."/>
            <person name="Hazen A."/>
            <person name="Cline R.T."/>
            <person name="Redmond C."/>
            <person name="Thwaite J.E."/>
            <person name="White O."/>
            <person name="Salzberg S.L."/>
            <person name="Thomason B."/>
            <person name="Friedlander A.M."/>
            <person name="Koehler T.M."/>
            <person name="Hanna P.C."/>
            <person name="Kolstoe A.-B."/>
            <person name="Fraser C.M."/>
        </authorList>
    </citation>
    <scope>NUCLEOTIDE SEQUENCE [LARGE SCALE GENOMIC DNA]</scope>
    <source>
        <strain>Ames / isolate Porton</strain>
    </source>
</reference>
<reference key="2">
    <citation type="journal article" date="2009" name="J. Bacteriol.">
        <title>The complete genome sequence of Bacillus anthracis Ames 'Ancestor'.</title>
        <authorList>
            <person name="Ravel J."/>
            <person name="Jiang L."/>
            <person name="Stanley S.T."/>
            <person name="Wilson M.R."/>
            <person name="Decker R.S."/>
            <person name="Read T.D."/>
            <person name="Worsham P."/>
            <person name="Keim P.S."/>
            <person name="Salzberg S.L."/>
            <person name="Fraser-Liggett C.M."/>
            <person name="Rasko D.A."/>
        </authorList>
    </citation>
    <scope>NUCLEOTIDE SEQUENCE [LARGE SCALE GENOMIC DNA]</scope>
    <source>
        <strain>Ames ancestor</strain>
    </source>
</reference>
<reference key="3">
    <citation type="submission" date="2004-01" db="EMBL/GenBank/DDBJ databases">
        <title>Complete genome sequence of Bacillus anthracis Sterne.</title>
        <authorList>
            <person name="Brettin T.S."/>
            <person name="Bruce D."/>
            <person name="Challacombe J.F."/>
            <person name="Gilna P."/>
            <person name="Han C."/>
            <person name="Hill K."/>
            <person name="Hitchcock P."/>
            <person name="Jackson P."/>
            <person name="Keim P."/>
            <person name="Longmire J."/>
            <person name="Lucas S."/>
            <person name="Okinaka R."/>
            <person name="Richardson P."/>
            <person name="Rubin E."/>
            <person name="Tice H."/>
        </authorList>
    </citation>
    <scope>NUCLEOTIDE SEQUENCE [LARGE SCALE GENOMIC DNA]</scope>
    <source>
        <strain>Sterne</strain>
    </source>
</reference>
<name>RL15_BACAN</name>
<keyword id="KW-1185">Reference proteome</keyword>
<keyword id="KW-0687">Ribonucleoprotein</keyword>
<keyword id="KW-0689">Ribosomal protein</keyword>
<keyword id="KW-0694">RNA-binding</keyword>
<keyword id="KW-0699">rRNA-binding</keyword>
<accession>Q81VR1</accession>
<accession>Q6I4R5</accession>
<accession>Q6KYG1</accession>
<evidence type="ECO:0000255" key="1">
    <source>
        <dbReference type="HAMAP-Rule" id="MF_01341"/>
    </source>
</evidence>
<evidence type="ECO:0000256" key="2">
    <source>
        <dbReference type="SAM" id="MobiDB-lite"/>
    </source>
</evidence>
<evidence type="ECO:0000305" key="3"/>
<organism>
    <name type="scientific">Bacillus anthracis</name>
    <dbReference type="NCBI Taxonomy" id="1392"/>
    <lineage>
        <taxon>Bacteria</taxon>
        <taxon>Bacillati</taxon>
        <taxon>Bacillota</taxon>
        <taxon>Bacilli</taxon>
        <taxon>Bacillales</taxon>
        <taxon>Bacillaceae</taxon>
        <taxon>Bacillus</taxon>
        <taxon>Bacillus cereus group</taxon>
    </lineage>
</organism>
<feature type="chain" id="PRO_0000104666" description="Large ribosomal subunit protein uL15">
    <location>
        <begin position="1"/>
        <end position="146"/>
    </location>
</feature>
<feature type="region of interest" description="Disordered" evidence="2">
    <location>
        <begin position="1"/>
        <end position="52"/>
    </location>
</feature>
<feature type="compositionally biased region" description="Basic and acidic residues" evidence="2">
    <location>
        <begin position="1"/>
        <end position="13"/>
    </location>
</feature>
<feature type="compositionally biased region" description="Gly residues" evidence="2">
    <location>
        <begin position="21"/>
        <end position="31"/>
    </location>
</feature>
<feature type="compositionally biased region" description="Gly residues" evidence="2">
    <location>
        <begin position="42"/>
        <end position="52"/>
    </location>
</feature>
<proteinExistence type="inferred from homology"/>
<dbReference type="EMBL" id="AE016879">
    <property type="protein sequence ID" value="AAP24183.1"/>
    <property type="molecule type" value="Genomic_DNA"/>
</dbReference>
<dbReference type="EMBL" id="AE017334">
    <property type="protein sequence ID" value="AAT29209.1"/>
    <property type="molecule type" value="Genomic_DNA"/>
</dbReference>
<dbReference type="EMBL" id="AE017225">
    <property type="protein sequence ID" value="AAT52466.1"/>
    <property type="molecule type" value="Genomic_DNA"/>
</dbReference>
<dbReference type="RefSeq" id="NP_842697.1">
    <property type="nucleotide sequence ID" value="NC_003997.3"/>
</dbReference>
<dbReference type="RefSeq" id="WP_000766080.1">
    <property type="nucleotide sequence ID" value="NZ_WXXJ01000051.1"/>
</dbReference>
<dbReference type="RefSeq" id="YP_026415.1">
    <property type="nucleotide sequence ID" value="NC_005945.1"/>
</dbReference>
<dbReference type="SMR" id="Q81VR1"/>
<dbReference type="STRING" id="261594.GBAA_0129"/>
<dbReference type="DNASU" id="1086033"/>
<dbReference type="GeneID" id="93010924"/>
<dbReference type="KEGG" id="ban:BA_0129"/>
<dbReference type="KEGG" id="bar:GBAA_0129"/>
<dbReference type="KEGG" id="bat:BAS0129"/>
<dbReference type="PATRIC" id="fig|198094.11.peg.126"/>
<dbReference type="eggNOG" id="COG0200">
    <property type="taxonomic scope" value="Bacteria"/>
</dbReference>
<dbReference type="HOGENOM" id="CLU_055188_4_2_9"/>
<dbReference type="OMA" id="WFEGGQM"/>
<dbReference type="OrthoDB" id="9810293at2"/>
<dbReference type="Proteomes" id="UP000000427">
    <property type="component" value="Chromosome"/>
</dbReference>
<dbReference type="Proteomes" id="UP000000594">
    <property type="component" value="Chromosome"/>
</dbReference>
<dbReference type="GO" id="GO:0022625">
    <property type="term" value="C:cytosolic large ribosomal subunit"/>
    <property type="evidence" value="ECO:0007669"/>
    <property type="project" value="TreeGrafter"/>
</dbReference>
<dbReference type="GO" id="GO:0019843">
    <property type="term" value="F:rRNA binding"/>
    <property type="evidence" value="ECO:0007669"/>
    <property type="project" value="UniProtKB-UniRule"/>
</dbReference>
<dbReference type="GO" id="GO:0003735">
    <property type="term" value="F:structural constituent of ribosome"/>
    <property type="evidence" value="ECO:0007669"/>
    <property type="project" value="InterPro"/>
</dbReference>
<dbReference type="GO" id="GO:0006412">
    <property type="term" value="P:translation"/>
    <property type="evidence" value="ECO:0007669"/>
    <property type="project" value="UniProtKB-UniRule"/>
</dbReference>
<dbReference type="FunFam" id="3.100.10.10:FF:000004">
    <property type="entry name" value="50S ribosomal protein L15"/>
    <property type="match status" value="1"/>
</dbReference>
<dbReference type="Gene3D" id="3.100.10.10">
    <property type="match status" value="1"/>
</dbReference>
<dbReference type="HAMAP" id="MF_01341">
    <property type="entry name" value="Ribosomal_uL15"/>
    <property type="match status" value="1"/>
</dbReference>
<dbReference type="InterPro" id="IPR030878">
    <property type="entry name" value="Ribosomal_uL15"/>
</dbReference>
<dbReference type="InterPro" id="IPR021131">
    <property type="entry name" value="Ribosomal_uL15/eL18"/>
</dbReference>
<dbReference type="InterPro" id="IPR036227">
    <property type="entry name" value="Ribosomal_uL15/eL18_sf"/>
</dbReference>
<dbReference type="InterPro" id="IPR005749">
    <property type="entry name" value="Ribosomal_uL15_bac-type"/>
</dbReference>
<dbReference type="InterPro" id="IPR001196">
    <property type="entry name" value="Ribosomal_uL15_CS"/>
</dbReference>
<dbReference type="NCBIfam" id="TIGR01071">
    <property type="entry name" value="rplO_bact"/>
    <property type="match status" value="1"/>
</dbReference>
<dbReference type="PANTHER" id="PTHR12934">
    <property type="entry name" value="50S RIBOSOMAL PROTEIN L15"/>
    <property type="match status" value="1"/>
</dbReference>
<dbReference type="PANTHER" id="PTHR12934:SF11">
    <property type="entry name" value="LARGE RIBOSOMAL SUBUNIT PROTEIN UL15M"/>
    <property type="match status" value="1"/>
</dbReference>
<dbReference type="Pfam" id="PF00828">
    <property type="entry name" value="Ribosomal_L27A"/>
    <property type="match status" value="1"/>
</dbReference>
<dbReference type="SUPFAM" id="SSF52080">
    <property type="entry name" value="Ribosomal proteins L15p and L18e"/>
    <property type="match status" value="1"/>
</dbReference>
<dbReference type="PROSITE" id="PS00475">
    <property type="entry name" value="RIBOSOMAL_L15"/>
    <property type="match status" value="1"/>
</dbReference>